<evidence type="ECO:0000255" key="1">
    <source>
        <dbReference type="HAMAP-Rule" id="MF_00067"/>
    </source>
</evidence>
<accession>A9KBY6</accession>
<gene>
    <name evidence="1" type="primary">gmhA</name>
    <name type="ordered locus">CBUD_0258</name>
</gene>
<protein>
    <recommendedName>
        <fullName evidence="1">Phosphoheptose isomerase</fullName>
        <ecNumber evidence="1">5.3.1.28</ecNumber>
    </recommendedName>
    <alternativeName>
        <fullName evidence="1">Sedoheptulose 7-phosphate isomerase</fullName>
    </alternativeName>
</protein>
<feature type="chain" id="PRO_1000075094" description="Phosphoheptose isomerase">
    <location>
        <begin position="1"/>
        <end position="199"/>
    </location>
</feature>
<feature type="domain" description="SIS" evidence="1">
    <location>
        <begin position="36"/>
        <end position="198"/>
    </location>
</feature>
<feature type="binding site" evidence="1">
    <location>
        <begin position="51"/>
        <end position="53"/>
    </location>
    <ligand>
        <name>substrate</name>
    </ligand>
</feature>
<feature type="binding site" evidence="1">
    <location>
        <position position="60"/>
    </location>
    <ligand>
        <name>Zn(2+)</name>
        <dbReference type="ChEBI" id="CHEBI:29105"/>
    </ligand>
</feature>
<feature type="binding site" evidence="1">
    <location>
        <position position="64"/>
    </location>
    <ligand>
        <name>substrate</name>
    </ligand>
</feature>
<feature type="binding site" evidence="1">
    <location>
        <position position="64"/>
    </location>
    <ligand>
        <name>Zn(2+)</name>
        <dbReference type="ChEBI" id="CHEBI:29105"/>
    </ligand>
</feature>
<feature type="binding site" evidence="1">
    <location>
        <begin position="93"/>
        <end position="94"/>
    </location>
    <ligand>
        <name>substrate</name>
    </ligand>
</feature>
<feature type="binding site" evidence="1">
    <location>
        <begin position="119"/>
        <end position="121"/>
    </location>
    <ligand>
        <name>substrate</name>
    </ligand>
</feature>
<feature type="binding site" evidence="1">
    <location>
        <position position="124"/>
    </location>
    <ligand>
        <name>substrate</name>
    </ligand>
</feature>
<feature type="binding site" evidence="1">
    <location>
        <position position="174"/>
    </location>
    <ligand>
        <name>substrate</name>
    </ligand>
</feature>
<feature type="binding site" evidence="1">
    <location>
        <position position="174"/>
    </location>
    <ligand>
        <name>Zn(2+)</name>
        <dbReference type="ChEBI" id="CHEBI:29105"/>
    </ligand>
</feature>
<feature type="binding site" evidence="1">
    <location>
        <position position="182"/>
    </location>
    <ligand>
        <name>Zn(2+)</name>
        <dbReference type="ChEBI" id="CHEBI:29105"/>
    </ligand>
</feature>
<dbReference type="EC" id="5.3.1.28" evidence="1"/>
<dbReference type="EMBL" id="CP000733">
    <property type="protein sequence ID" value="ABS78338.1"/>
    <property type="molecule type" value="Genomic_DNA"/>
</dbReference>
<dbReference type="RefSeq" id="WP_005770434.1">
    <property type="nucleotide sequence ID" value="NC_009727.1"/>
</dbReference>
<dbReference type="SMR" id="A9KBY6"/>
<dbReference type="KEGG" id="cbd:CBUD_0258"/>
<dbReference type="HOGENOM" id="CLU_080999_3_1_6"/>
<dbReference type="UniPathway" id="UPA00041">
    <property type="reaction ID" value="UER00436"/>
</dbReference>
<dbReference type="Proteomes" id="UP000008555">
    <property type="component" value="Chromosome"/>
</dbReference>
<dbReference type="GO" id="GO:0005737">
    <property type="term" value="C:cytoplasm"/>
    <property type="evidence" value="ECO:0007669"/>
    <property type="project" value="UniProtKB-SubCell"/>
</dbReference>
<dbReference type="GO" id="GO:0097367">
    <property type="term" value="F:carbohydrate derivative binding"/>
    <property type="evidence" value="ECO:0007669"/>
    <property type="project" value="InterPro"/>
</dbReference>
<dbReference type="GO" id="GO:0008968">
    <property type="term" value="F:D-sedoheptulose 7-phosphate isomerase activity"/>
    <property type="evidence" value="ECO:0007669"/>
    <property type="project" value="UniProtKB-UniRule"/>
</dbReference>
<dbReference type="GO" id="GO:0008270">
    <property type="term" value="F:zinc ion binding"/>
    <property type="evidence" value="ECO:0007669"/>
    <property type="project" value="UniProtKB-UniRule"/>
</dbReference>
<dbReference type="GO" id="GO:0005975">
    <property type="term" value="P:carbohydrate metabolic process"/>
    <property type="evidence" value="ECO:0007669"/>
    <property type="project" value="UniProtKB-UniRule"/>
</dbReference>
<dbReference type="GO" id="GO:2001061">
    <property type="term" value="P:D-glycero-D-manno-heptose 7-phosphate biosynthetic process"/>
    <property type="evidence" value="ECO:0007669"/>
    <property type="project" value="UniProtKB-UniPathway"/>
</dbReference>
<dbReference type="CDD" id="cd05006">
    <property type="entry name" value="SIS_GmhA"/>
    <property type="match status" value="1"/>
</dbReference>
<dbReference type="Gene3D" id="3.40.50.10490">
    <property type="entry name" value="Glucose-6-phosphate isomerase like protein, domain 1"/>
    <property type="match status" value="1"/>
</dbReference>
<dbReference type="HAMAP" id="MF_00067">
    <property type="entry name" value="GmhA"/>
    <property type="match status" value="1"/>
</dbReference>
<dbReference type="InterPro" id="IPR035461">
    <property type="entry name" value="GmhA/DiaA"/>
</dbReference>
<dbReference type="InterPro" id="IPR004515">
    <property type="entry name" value="Phosphoheptose_Isoase"/>
</dbReference>
<dbReference type="InterPro" id="IPR001347">
    <property type="entry name" value="SIS_dom"/>
</dbReference>
<dbReference type="InterPro" id="IPR046348">
    <property type="entry name" value="SIS_dom_sf"/>
</dbReference>
<dbReference type="InterPro" id="IPR050099">
    <property type="entry name" value="SIS_GmhA/DiaA_subfam"/>
</dbReference>
<dbReference type="NCBIfam" id="NF010546">
    <property type="entry name" value="PRK13936.1"/>
    <property type="match status" value="1"/>
</dbReference>
<dbReference type="PANTHER" id="PTHR30390:SF6">
    <property type="entry name" value="DNAA INITIATOR-ASSOCIATING PROTEIN DIAA"/>
    <property type="match status" value="1"/>
</dbReference>
<dbReference type="PANTHER" id="PTHR30390">
    <property type="entry name" value="SEDOHEPTULOSE 7-PHOSPHATE ISOMERASE / DNAA INITIATOR-ASSOCIATING FACTOR FOR REPLICATION INITIATION"/>
    <property type="match status" value="1"/>
</dbReference>
<dbReference type="Pfam" id="PF13580">
    <property type="entry name" value="SIS_2"/>
    <property type="match status" value="1"/>
</dbReference>
<dbReference type="SUPFAM" id="SSF53697">
    <property type="entry name" value="SIS domain"/>
    <property type="match status" value="1"/>
</dbReference>
<dbReference type="PROSITE" id="PS51464">
    <property type="entry name" value="SIS"/>
    <property type="match status" value="1"/>
</dbReference>
<sequence length="199" mass="21485">MNLFQRVKYNFEESIKTKTAAIELLVDPIVQAGELMAQCLLNEHKILSCGNGGSAADAQHFSSEMLNRFETERPSFPALALTTDASTVTAIANDYSYAEVFSKQIAGLGSTGDILLAISTSGHSKNILQAITAAHIRGMNVVALTGRDGGELFTLLGTDDIEIRVPAESTARIQETHALIIHCLCDIIDRKLIPSSEDH</sequence>
<reference key="1">
    <citation type="journal article" date="2009" name="Infect. Immun.">
        <title>Comparative genomics reveal extensive transposon-mediated genomic plasticity and diversity among potential effector proteins within the genus Coxiella.</title>
        <authorList>
            <person name="Beare P.A."/>
            <person name="Unsworth N."/>
            <person name="Andoh M."/>
            <person name="Voth D.E."/>
            <person name="Omsland A."/>
            <person name="Gilk S.D."/>
            <person name="Williams K.P."/>
            <person name="Sobral B.W."/>
            <person name="Kupko J.J. III"/>
            <person name="Porcella S.F."/>
            <person name="Samuel J.E."/>
            <person name="Heinzen R.A."/>
        </authorList>
    </citation>
    <scope>NUCLEOTIDE SEQUENCE [LARGE SCALE GENOMIC DNA]</scope>
    <source>
        <strain>Dugway 5J108-111</strain>
    </source>
</reference>
<proteinExistence type="inferred from homology"/>
<organism>
    <name type="scientific">Coxiella burnetii (strain Dugway 5J108-111)</name>
    <dbReference type="NCBI Taxonomy" id="434922"/>
    <lineage>
        <taxon>Bacteria</taxon>
        <taxon>Pseudomonadati</taxon>
        <taxon>Pseudomonadota</taxon>
        <taxon>Gammaproteobacteria</taxon>
        <taxon>Legionellales</taxon>
        <taxon>Coxiellaceae</taxon>
        <taxon>Coxiella</taxon>
    </lineage>
</organism>
<comment type="function">
    <text evidence="1">Catalyzes the isomerization of sedoheptulose 7-phosphate in D-glycero-D-manno-heptose 7-phosphate.</text>
</comment>
<comment type="catalytic activity">
    <reaction evidence="1">
        <text>2 D-sedoheptulose 7-phosphate = D-glycero-alpha-D-manno-heptose 7-phosphate + D-glycero-beta-D-manno-heptose 7-phosphate</text>
        <dbReference type="Rhea" id="RHEA:27489"/>
        <dbReference type="ChEBI" id="CHEBI:57483"/>
        <dbReference type="ChEBI" id="CHEBI:60203"/>
        <dbReference type="ChEBI" id="CHEBI:60204"/>
        <dbReference type="EC" id="5.3.1.28"/>
    </reaction>
</comment>
<comment type="cofactor">
    <cofactor evidence="1">
        <name>Zn(2+)</name>
        <dbReference type="ChEBI" id="CHEBI:29105"/>
    </cofactor>
    <text evidence="1">Binds 1 zinc ion per subunit.</text>
</comment>
<comment type="pathway">
    <text evidence="1">Carbohydrate biosynthesis; D-glycero-D-manno-heptose 7-phosphate biosynthesis; D-glycero-alpha-D-manno-heptose 7-phosphate and D-glycero-beta-D-manno-heptose 7-phosphate from sedoheptulose 7-phosphate: step 1/1.</text>
</comment>
<comment type="subunit">
    <text evidence="1">Homotetramer.</text>
</comment>
<comment type="subcellular location">
    <subcellularLocation>
        <location evidence="1">Cytoplasm</location>
    </subcellularLocation>
</comment>
<comment type="miscellaneous">
    <text evidence="1">The reaction produces a racemic mixture of D-glycero-alpha-D-manno-heptose 7-phosphate and D-glycero-beta-D-manno-heptose 7-phosphate.</text>
</comment>
<comment type="similarity">
    <text evidence="1">Belongs to the SIS family. GmhA subfamily.</text>
</comment>
<keyword id="KW-0119">Carbohydrate metabolism</keyword>
<keyword id="KW-0963">Cytoplasm</keyword>
<keyword id="KW-0413">Isomerase</keyword>
<keyword id="KW-0479">Metal-binding</keyword>
<keyword id="KW-0862">Zinc</keyword>
<name>GMHA_COXBN</name>